<organism>
    <name type="scientific">Methylibium petroleiphilum (strain ATCC BAA-1232 / LMG 22953 / PM1)</name>
    <dbReference type="NCBI Taxonomy" id="420662"/>
    <lineage>
        <taxon>Bacteria</taxon>
        <taxon>Pseudomonadati</taxon>
        <taxon>Pseudomonadota</taxon>
        <taxon>Betaproteobacteria</taxon>
        <taxon>Burkholderiales</taxon>
        <taxon>Sphaerotilaceae</taxon>
        <taxon>Methylibium</taxon>
    </lineage>
</organism>
<protein>
    <recommendedName>
        <fullName evidence="1">Acetylglutamate kinase</fullName>
        <ecNumber evidence="1">2.7.2.8</ecNumber>
    </recommendedName>
    <alternativeName>
        <fullName evidence="1">N-acetyl-L-glutamate 5-phosphotransferase</fullName>
    </alternativeName>
    <alternativeName>
        <fullName evidence="1">NAG kinase</fullName>
        <shortName evidence="1">NAGK</shortName>
    </alternativeName>
</protein>
<name>ARGB_METPP</name>
<evidence type="ECO:0000255" key="1">
    <source>
        <dbReference type="HAMAP-Rule" id="MF_00082"/>
    </source>
</evidence>
<keyword id="KW-0028">Amino-acid biosynthesis</keyword>
<keyword id="KW-0055">Arginine biosynthesis</keyword>
<keyword id="KW-0067">ATP-binding</keyword>
<keyword id="KW-0963">Cytoplasm</keyword>
<keyword id="KW-0418">Kinase</keyword>
<keyword id="KW-0547">Nucleotide-binding</keyword>
<keyword id="KW-1185">Reference proteome</keyword>
<keyword id="KW-0808">Transferase</keyword>
<comment type="function">
    <text evidence="1">Catalyzes the ATP-dependent phosphorylation of N-acetyl-L-glutamate.</text>
</comment>
<comment type="catalytic activity">
    <reaction evidence="1">
        <text>N-acetyl-L-glutamate + ATP = N-acetyl-L-glutamyl 5-phosphate + ADP</text>
        <dbReference type="Rhea" id="RHEA:14629"/>
        <dbReference type="ChEBI" id="CHEBI:30616"/>
        <dbReference type="ChEBI" id="CHEBI:44337"/>
        <dbReference type="ChEBI" id="CHEBI:57936"/>
        <dbReference type="ChEBI" id="CHEBI:456216"/>
        <dbReference type="EC" id="2.7.2.8"/>
    </reaction>
</comment>
<comment type="pathway">
    <text evidence="1">Amino-acid biosynthesis; L-arginine biosynthesis; N(2)-acetyl-L-ornithine from L-glutamate: step 2/4.</text>
</comment>
<comment type="subcellular location">
    <subcellularLocation>
        <location evidence="1">Cytoplasm</location>
    </subcellularLocation>
</comment>
<comment type="similarity">
    <text evidence="1">Belongs to the acetylglutamate kinase family. ArgB subfamily.</text>
</comment>
<dbReference type="EC" id="2.7.2.8" evidence="1"/>
<dbReference type="EMBL" id="CP000555">
    <property type="protein sequence ID" value="ABM93461.1"/>
    <property type="molecule type" value="Genomic_DNA"/>
</dbReference>
<dbReference type="RefSeq" id="WP_011828099.1">
    <property type="nucleotide sequence ID" value="NC_008825.1"/>
</dbReference>
<dbReference type="SMR" id="A2SD22"/>
<dbReference type="STRING" id="420662.Mpe_A0499"/>
<dbReference type="KEGG" id="mpt:Mpe_A0499"/>
<dbReference type="eggNOG" id="COG0548">
    <property type="taxonomic scope" value="Bacteria"/>
</dbReference>
<dbReference type="HOGENOM" id="CLU_053680_0_0_4"/>
<dbReference type="UniPathway" id="UPA00068">
    <property type="reaction ID" value="UER00107"/>
</dbReference>
<dbReference type="Proteomes" id="UP000000366">
    <property type="component" value="Chromosome"/>
</dbReference>
<dbReference type="GO" id="GO:0005737">
    <property type="term" value="C:cytoplasm"/>
    <property type="evidence" value="ECO:0007669"/>
    <property type="project" value="UniProtKB-SubCell"/>
</dbReference>
<dbReference type="GO" id="GO:0003991">
    <property type="term" value="F:acetylglutamate kinase activity"/>
    <property type="evidence" value="ECO:0007669"/>
    <property type="project" value="UniProtKB-UniRule"/>
</dbReference>
<dbReference type="GO" id="GO:0005524">
    <property type="term" value="F:ATP binding"/>
    <property type="evidence" value="ECO:0007669"/>
    <property type="project" value="UniProtKB-UniRule"/>
</dbReference>
<dbReference type="GO" id="GO:0042450">
    <property type="term" value="P:arginine biosynthetic process via ornithine"/>
    <property type="evidence" value="ECO:0007669"/>
    <property type="project" value="UniProtKB-UniRule"/>
</dbReference>
<dbReference type="GO" id="GO:0006526">
    <property type="term" value="P:L-arginine biosynthetic process"/>
    <property type="evidence" value="ECO:0007669"/>
    <property type="project" value="UniProtKB-UniPathway"/>
</dbReference>
<dbReference type="CDD" id="cd04250">
    <property type="entry name" value="AAK_NAGK-C"/>
    <property type="match status" value="1"/>
</dbReference>
<dbReference type="FunFam" id="3.40.1160.10:FF:000004">
    <property type="entry name" value="Acetylglutamate kinase"/>
    <property type="match status" value="1"/>
</dbReference>
<dbReference type="Gene3D" id="3.40.1160.10">
    <property type="entry name" value="Acetylglutamate kinase-like"/>
    <property type="match status" value="1"/>
</dbReference>
<dbReference type="HAMAP" id="MF_00082">
    <property type="entry name" value="ArgB"/>
    <property type="match status" value="1"/>
</dbReference>
<dbReference type="InterPro" id="IPR036393">
    <property type="entry name" value="AceGlu_kinase-like_sf"/>
</dbReference>
<dbReference type="InterPro" id="IPR004662">
    <property type="entry name" value="AcgluKinase_fam"/>
</dbReference>
<dbReference type="InterPro" id="IPR037528">
    <property type="entry name" value="ArgB"/>
</dbReference>
<dbReference type="InterPro" id="IPR001048">
    <property type="entry name" value="Asp/Glu/Uridylate_kinase"/>
</dbReference>
<dbReference type="InterPro" id="IPR001057">
    <property type="entry name" value="Glu/AcGlu_kinase"/>
</dbReference>
<dbReference type="InterPro" id="IPR041727">
    <property type="entry name" value="NAGK-C"/>
</dbReference>
<dbReference type="NCBIfam" id="TIGR00761">
    <property type="entry name" value="argB"/>
    <property type="match status" value="1"/>
</dbReference>
<dbReference type="PANTHER" id="PTHR23342">
    <property type="entry name" value="N-ACETYLGLUTAMATE SYNTHASE"/>
    <property type="match status" value="1"/>
</dbReference>
<dbReference type="PANTHER" id="PTHR23342:SF0">
    <property type="entry name" value="N-ACETYLGLUTAMATE SYNTHASE, MITOCHONDRIAL"/>
    <property type="match status" value="1"/>
</dbReference>
<dbReference type="Pfam" id="PF00696">
    <property type="entry name" value="AA_kinase"/>
    <property type="match status" value="1"/>
</dbReference>
<dbReference type="PIRSF" id="PIRSF000728">
    <property type="entry name" value="NAGK"/>
    <property type="match status" value="1"/>
</dbReference>
<dbReference type="PRINTS" id="PR00474">
    <property type="entry name" value="GLU5KINASE"/>
</dbReference>
<dbReference type="SUPFAM" id="SSF53633">
    <property type="entry name" value="Carbamate kinase-like"/>
    <property type="match status" value="1"/>
</dbReference>
<accession>A2SD22</accession>
<feature type="chain" id="PRO_0000335645" description="Acetylglutamate kinase">
    <location>
        <begin position="1"/>
        <end position="304"/>
    </location>
</feature>
<feature type="binding site" evidence="1">
    <location>
        <begin position="77"/>
        <end position="78"/>
    </location>
    <ligand>
        <name>substrate</name>
    </ligand>
</feature>
<feature type="binding site" evidence="1">
    <location>
        <position position="99"/>
    </location>
    <ligand>
        <name>substrate</name>
    </ligand>
</feature>
<feature type="binding site" evidence="1">
    <location>
        <position position="201"/>
    </location>
    <ligand>
        <name>substrate</name>
    </ligand>
</feature>
<feature type="site" description="Transition state stabilizer" evidence="1">
    <location>
        <position position="42"/>
    </location>
</feature>
<feature type="site" description="Transition state stabilizer" evidence="1">
    <location>
        <position position="261"/>
    </location>
</feature>
<gene>
    <name evidence="1" type="primary">argB</name>
    <name type="ordered locus">Mpe_A0499</name>
</gene>
<proteinExistence type="inferred from homology"/>
<reference key="1">
    <citation type="journal article" date="2007" name="J. Bacteriol.">
        <title>Whole-genome analysis of the methyl tert-butyl ether-degrading beta-proteobacterium Methylibium petroleiphilum PM1.</title>
        <authorList>
            <person name="Kane S.R."/>
            <person name="Chakicherla A.Y."/>
            <person name="Chain P.S.G."/>
            <person name="Schmidt R."/>
            <person name="Shin M.W."/>
            <person name="Legler T.C."/>
            <person name="Scow K.M."/>
            <person name="Larimer F.W."/>
            <person name="Lucas S.M."/>
            <person name="Richardson P.M."/>
            <person name="Hristova K.R."/>
        </authorList>
    </citation>
    <scope>NUCLEOTIDE SEQUENCE [LARGE SCALE GENOMIC DNA]</scope>
    <source>
        <strain>ATCC BAA-1232 / LMG 22953 / PM1</strain>
    </source>
</reference>
<sequence length="304" mass="32276">MAPPVPAPSSDLPNIAPRDKAEILAQALPYIRKFHGKTLVIKYGGNAMTDPALQQDFAEDIVLLKLVGMNPVVVHGGGPQIDEALSRLGKKGTFIQGMRVTDEETMEVVEWVLGGEVQQDIVGLINAVGGKAVGLTGRDGGMIRARKLKMVDKDDPSIEHDVGQVGEITAIDPAVVKALQDDQFIPVVSPIGFGEHNESYNINADMVASKLATVLQAEKLMLLTNTPGVLDKAGKLLTNLSAREIDELFADGTISGGMLPKIAGALDAAKSGVNAVHIIDGRVPHAMLLEILSDQAYGTMIRSH</sequence>